<protein>
    <recommendedName>
        <fullName evidence="1">Anhydro-N-acetylmuramic acid kinase</fullName>
        <ecNumber evidence="1">2.7.1.170</ecNumber>
    </recommendedName>
    <alternativeName>
        <fullName evidence="1">AnhMurNAc kinase</fullName>
    </alternativeName>
</protein>
<accession>Q7VUW3</accession>
<organism>
    <name type="scientific">Bordetella pertussis (strain Tohama I / ATCC BAA-589 / NCTC 13251)</name>
    <dbReference type="NCBI Taxonomy" id="257313"/>
    <lineage>
        <taxon>Bacteria</taxon>
        <taxon>Pseudomonadati</taxon>
        <taxon>Pseudomonadota</taxon>
        <taxon>Betaproteobacteria</taxon>
        <taxon>Burkholderiales</taxon>
        <taxon>Alcaligenaceae</taxon>
        <taxon>Bordetella</taxon>
    </lineage>
</organism>
<proteinExistence type="inferred from homology"/>
<name>ANMK_BORPE</name>
<sequence length="378" mass="39576">MDSTTHGPRTHVPGRLFIGLMSGTSMDGADGVLVRLDGPRPEVLASASLPMPAALRDELFALNHAGANELERAALAANGLARLYARAVRQLLDQAGLQPGDVAAIGAHGQTVRHRPDLGYTLQLNAPALLAELAGIDVVADFRSRDVAAGGQGAPLVPPFHAALFAGGQARAVLNLGGIANVTLLEPGRPPRGFDTGPANVLLDAWCQRHTGQPYDADGRFAAQGQVLADLLEHLIASEPWFALAPPKSTGRDLFNLDWLLARLQAFDGPAPQPQDVQATLQRLTARTVANAIDASAAAPRDVLVCGGGARNPGLMRELAYCLQRPVRPTDDAGVPAQWVEALAFAWLAQACLDRIPAGLPTVTGARAARVLGALYPA</sequence>
<feature type="chain" id="PRO_0000249978" description="Anhydro-N-acetylmuramic acid kinase">
    <location>
        <begin position="1"/>
        <end position="378"/>
    </location>
</feature>
<feature type="binding site" evidence="1">
    <location>
        <begin position="23"/>
        <end position="30"/>
    </location>
    <ligand>
        <name>ATP</name>
        <dbReference type="ChEBI" id="CHEBI:30616"/>
    </ligand>
</feature>
<comment type="function">
    <text evidence="1">Catalyzes the specific phosphorylation of 1,6-anhydro-N-acetylmuramic acid (anhMurNAc) with the simultaneous cleavage of the 1,6-anhydro ring, generating MurNAc-6-P. Is required for the utilization of anhMurNAc either imported from the medium or derived from its own cell wall murein, and thus plays a role in cell wall recycling.</text>
</comment>
<comment type="catalytic activity">
    <reaction evidence="1">
        <text>1,6-anhydro-N-acetyl-beta-muramate + ATP + H2O = N-acetyl-D-muramate 6-phosphate + ADP + H(+)</text>
        <dbReference type="Rhea" id="RHEA:24952"/>
        <dbReference type="ChEBI" id="CHEBI:15377"/>
        <dbReference type="ChEBI" id="CHEBI:15378"/>
        <dbReference type="ChEBI" id="CHEBI:30616"/>
        <dbReference type="ChEBI" id="CHEBI:58690"/>
        <dbReference type="ChEBI" id="CHEBI:58722"/>
        <dbReference type="ChEBI" id="CHEBI:456216"/>
        <dbReference type="EC" id="2.7.1.170"/>
    </reaction>
</comment>
<comment type="pathway">
    <text evidence="1">Amino-sugar metabolism; 1,6-anhydro-N-acetylmuramate degradation.</text>
</comment>
<comment type="pathway">
    <text evidence="1">Cell wall biogenesis; peptidoglycan recycling.</text>
</comment>
<comment type="similarity">
    <text evidence="1">Belongs to the anhydro-N-acetylmuramic acid kinase family.</text>
</comment>
<reference key="1">
    <citation type="journal article" date="2003" name="Nat. Genet.">
        <title>Comparative analysis of the genome sequences of Bordetella pertussis, Bordetella parapertussis and Bordetella bronchiseptica.</title>
        <authorList>
            <person name="Parkhill J."/>
            <person name="Sebaihia M."/>
            <person name="Preston A."/>
            <person name="Murphy L.D."/>
            <person name="Thomson N.R."/>
            <person name="Harris D.E."/>
            <person name="Holden M.T.G."/>
            <person name="Churcher C.M."/>
            <person name="Bentley S.D."/>
            <person name="Mungall K.L."/>
            <person name="Cerdeno-Tarraga A.-M."/>
            <person name="Temple L."/>
            <person name="James K.D."/>
            <person name="Harris B."/>
            <person name="Quail M.A."/>
            <person name="Achtman M."/>
            <person name="Atkin R."/>
            <person name="Baker S."/>
            <person name="Basham D."/>
            <person name="Bason N."/>
            <person name="Cherevach I."/>
            <person name="Chillingworth T."/>
            <person name="Collins M."/>
            <person name="Cronin A."/>
            <person name="Davis P."/>
            <person name="Doggett J."/>
            <person name="Feltwell T."/>
            <person name="Goble A."/>
            <person name="Hamlin N."/>
            <person name="Hauser H."/>
            <person name="Holroyd S."/>
            <person name="Jagels K."/>
            <person name="Leather S."/>
            <person name="Moule S."/>
            <person name="Norberczak H."/>
            <person name="O'Neil S."/>
            <person name="Ormond D."/>
            <person name="Price C."/>
            <person name="Rabbinowitsch E."/>
            <person name="Rutter S."/>
            <person name="Sanders M."/>
            <person name="Saunders D."/>
            <person name="Seeger K."/>
            <person name="Sharp S."/>
            <person name="Simmonds M."/>
            <person name="Skelton J."/>
            <person name="Squares R."/>
            <person name="Squares S."/>
            <person name="Stevens K."/>
            <person name="Unwin L."/>
            <person name="Whitehead S."/>
            <person name="Barrell B.G."/>
            <person name="Maskell D.J."/>
        </authorList>
    </citation>
    <scope>NUCLEOTIDE SEQUENCE [LARGE SCALE GENOMIC DNA]</scope>
    <source>
        <strain>Tohama I / ATCC BAA-589 / NCTC 13251</strain>
    </source>
</reference>
<keyword id="KW-0067">ATP-binding</keyword>
<keyword id="KW-0119">Carbohydrate metabolism</keyword>
<keyword id="KW-0418">Kinase</keyword>
<keyword id="KW-0547">Nucleotide-binding</keyword>
<keyword id="KW-1185">Reference proteome</keyword>
<keyword id="KW-0808">Transferase</keyword>
<dbReference type="EC" id="2.7.1.170" evidence="1"/>
<dbReference type="EMBL" id="BX640420">
    <property type="protein sequence ID" value="CAE43229.1"/>
    <property type="molecule type" value="Genomic_DNA"/>
</dbReference>
<dbReference type="RefSeq" id="NP_881536.1">
    <property type="nucleotide sequence ID" value="NC_002929.2"/>
</dbReference>
<dbReference type="RefSeq" id="WP_010931222.1">
    <property type="nucleotide sequence ID" value="NZ_CP039022.1"/>
</dbReference>
<dbReference type="SMR" id="Q7VUW3"/>
<dbReference type="STRING" id="257313.BP2957"/>
<dbReference type="PaxDb" id="257313-BP2957"/>
<dbReference type="KEGG" id="bpe:BP2957"/>
<dbReference type="PATRIC" id="fig|257313.5.peg.3199"/>
<dbReference type="eggNOG" id="COG2377">
    <property type="taxonomic scope" value="Bacteria"/>
</dbReference>
<dbReference type="HOGENOM" id="CLU_038782_0_0_4"/>
<dbReference type="UniPathway" id="UPA00343"/>
<dbReference type="UniPathway" id="UPA00544"/>
<dbReference type="Proteomes" id="UP000002676">
    <property type="component" value="Chromosome"/>
</dbReference>
<dbReference type="GO" id="GO:0005524">
    <property type="term" value="F:ATP binding"/>
    <property type="evidence" value="ECO:0007669"/>
    <property type="project" value="UniProtKB-UniRule"/>
</dbReference>
<dbReference type="GO" id="GO:0016301">
    <property type="term" value="F:kinase activity"/>
    <property type="evidence" value="ECO:0007669"/>
    <property type="project" value="UniProtKB-KW"/>
</dbReference>
<dbReference type="GO" id="GO:0016773">
    <property type="term" value="F:phosphotransferase activity, alcohol group as acceptor"/>
    <property type="evidence" value="ECO:0007669"/>
    <property type="project" value="UniProtKB-UniRule"/>
</dbReference>
<dbReference type="GO" id="GO:0097175">
    <property type="term" value="P:1,6-anhydro-N-acetyl-beta-muramic acid catabolic process"/>
    <property type="evidence" value="ECO:0007669"/>
    <property type="project" value="UniProtKB-UniRule"/>
</dbReference>
<dbReference type="GO" id="GO:0006040">
    <property type="term" value="P:amino sugar metabolic process"/>
    <property type="evidence" value="ECO:0007669"/>
    <property type="project" value="InterPro"/>
</dbReference>
<dbReference type="GO" id="GO:0009254">
    <property type="term" value="P:peptidoglycan turnover"/>
    <property type="evidence" value="ECO:0007669"/>
    <property type="project" value="UniProtKB-UniRule"/>
</dbReference>
<dbReference type="CDD" id="cd24050">
    <property type="entry name" value="ASKHA_NBD_ANMK"/>
    <property type="match status" value="1"/>
</dbReference>
<dbReference type="Gene3D" id="3.30.420.40">
    <property type="match status" value="2"/>
</dbReference>
<dbReference type="HAMAP" id="MF_01270">
    <property type="entry name" value="AnhMurNAc_kinase"/>
    <property type="match status" value="1"/>
</dbReference>
<dbReference type="InterPro" id="IPR005338">
    <property type="entry name" value="Anhydro_N_Ac-Mur_kinase"/>
</dbReference>
<dbReference type="InterPro" id="IPR043129">
    <property type="entry name" value="ATPase_NBD"/>
</dbReference>
<dbReference type="NCBIfam" id="NF007139">
    <property type="entry name" value="PRK09585.1-3"/>
    <property type="match status" value="1"/>
</dbReference>
<dbReference type="PANTHER" id="PTHR30605">
    <property type="entry name" value="ANHYDRO-N-ACETYLMURAMIC ACID KINASE"/>
    <property type="match status" value="1"/>
</dbReference>
<dbReference type="PANTHER" id="PTHR30605:SF0">
    <property type="entry name" value="ANHYDRO-N-ACETYLMURAMIC ACID KINASE"/>
    <property type="match status" value="1"/>
</dbReference>
<dbReference type="Pfam" id="PF03702">
    <property type="entry name" value="AnmK"/>
    <property type="match status" value="1"/>
</dbReference>
<dbReference type="SUPFAM" id="SSF53067">
    <property type="entry name" value="Actin-like ATPase domain"/>
    <property type="match status" value="1"/>
</dbReference>
<evidence type="ECO:0000255" key="1">
    <source>
        <dbReference type="HAMAP-Rule" id="MF_01270"/>
    </source>
</evidence>
<gene>
    <name evidence="1" type="primary">anmK</name>
    <name type="ordered locus">BP2957</name>
</gene>